<gene>
    <name evidence="4" type="primary">Or5p76</name>
    <name evidence="4" type="synonym">Mor204-8</name>
    <name evidence="4" type="synonym">Olfr502</name>
</gene>
<organism>
    <name type="scientific">Mus musculus</name>
    <name type="common">Mouse</name>
    <dbReference type="NCBI Taxonomy" id="10090"/>
    <lineage>
        <taxon>Eukaryota</taxon>
        <taxon>Metazoa</taxon>
        <taxon>Chordata</taxon>
        <taxon>Craniata</taxon>
        <taxon>Vertebrata</taxon>
        <taxon>Euteleostomi</taxon>
        <taxon>Mammalia</taxon>
        <taxon>Eutheria</taxon>
        <taxon>Euarchontoglires</taxon>
        <taxon>Glires</taxon>
        <taxon>Rodentia</taxon>
        <taxon>Myomorpha</taxon>
        <taxon>Muroidea</taxon>
        <taxon>Muridae</taxon>
        <taxon>Murinae</taxon>
        <taxon>Mus</taxon>
        <taxon>Mus</taxon>
    </lineage>
</organism>
<keyword id="KW-1003">Cell membrane</keyword>
<keyword id="KW-1015">Disulfide bond</keyword>
<keyword id="KW-0297">G-protein coupled receptor</keyword>
<keyword id="KW-0325">Glycoprotein</keyword>
<keyword id="KW-0472">Membrane</keyword>
<keyword id="KW-0552">Olfaction</keyword>
<keyword id="KW-0675">Receptor</keyword>
<keyword id="KW-1185">Reference proteome</keyword>
<keyword id="KW-0716">Sensory transduction</keyword>
<keyword id="KW-0807">Transducer</keyword>
<keyword id="KW-0812">Transmembrane</keyword>
<keyword id="KW-1133">Transmembrane helix</keyword>
<protein>
    <recommendedName>
        <fullName evidence="4">Olfactory receptor 5P76</fullName>
    </recommendedName>
    <alternativeName>
        <fullName>Olfactory receptor 204-8</fullName>
    </alternativeName>
    <alternativeName>
        <fullName>Olfactory receptor 502</fullName>
    </alternativeName>
</protein>
<evidence type="ECO:0000255" key="1"/>
<evidence type="ECO:0000255" key="2">
    <source>
        <dbReference type="PROSITE-ProRule" id="PRU00521"/>
    </source>
</evidence>
<evidence type="ECO:0000305" key="3"/>
<evidence type="ECO:0000312" key="4">
    <source>
        <dbReference type="MGI" id="MGI:3030336"/>
    </source>
</evidence>
<sequence>MAFLEDGNHTAVTGFILLGLTDDPVLRVVLFVIILCIYLVTVSGNLSTILLIRVSSQLHHPMYFFLSHLASADIGYSSSVTPNMLVNFLVERNTISYLGCGIQLGSAVFFGTVECFLLAAMAYDRFIAICSPLLYSNKMSTQVCVQLLVGSYIGGFLNASSFTLSFFSLVFCGPNRVNHFFCDFAPLVKLSCSDVSVPAVVPSFTAGSIIIVTIFVIAVSYIYILITILKMRSTEGRQKAFSTCTSHLTAVTLFYGTITFIYVMPKSSYSTDQNKVVSVFYMVVVPMLNPLIYSLRNKEIKGALKRQLAKNTFS</sequence>
<proteinExistence type="evidence at transcript level"/>
<name>O5P76_MOUSE</name>
<dbReference type="EMBL" id="AY073356">
    <property type="protein sequence ID" value="AAL61019.1"/>
    <property type="molecule type" value="Genomic_DNA"/>
</dbReference>
<dbReference type="EMBL" id="AY317610">
    <property type="protein sequence ID" value="AAP71001.1"/>
    <property type="molecule type" value="Genomic_DNA"/>
</dbReference>
<dbReference type="EMBL" id="BC119235">
    <property type="protein sequence ID" value="AAI19236.1"/>
    <property type="molecule type" value="mRNA"/>
</dbReference>
<dbReference type="EMBL" id="BC120678">
    <property type="protein sequence ID" value="AAI20679.1"/>
    <property type="molecule type" value="mRNA"/>
</dbReference>
<dbReference type="CCDS" id="CCDS21717.1"/>
<dbReference type="RefSeq" id="NP_666950.1">
    <property type="nucleotide sequence ID" value="NM_146739.1"/>
</dbReference>
<dbReference type="SMR" id="Q8VG09"/>
<dbReference type="FunCoup" id="Q8VG09">
    <property type="interactions" value="1207"/>
</dbReference>
<dbReference type="STRING" id="10090.ENSMUSP00000151167"/>
<dbReference type="GlyCosmos" id="Q8VG09">
    <property type="glycosylation" value="1 site, No reported glycans"/>
</dbReference>
<dbReference type="GlyGen" id="Q8VG09">
    <property type="glycosylation" value="1 site"/>
</dbReference>
<dbReference type="PaxDb" id="10090-ENSMUSP00000077963"/>
<dbReference type="Ensembl" id="ENSMUST00000078933.5">
    <property type="protein sequence ID" value="ENSMUSP00000077963.3"/>
    <property type="gene ID" value="ENSMUSG00000058014.5"/>
</dbReference>
<dbReference type="Ensembl" id="ENSMUST00000216919.2">
    <property type="protein sequence ID" value="ENSMUSP00000151167.2"/>
    <property type="gene ID" value="ENSMUSG00000058014.5"/>
</dbReference>
<dbReference type="GeneID" id="258734"/>
<dbReference type="KEGG" id="mmu:258734"/>
<dbReference type="UCSC" id="uc009jcm.1">
    <property type="organism name" value="mouse"/>
</dbReference>
<dbReference type="AGR" id="MGI:3030336"/>
<dbReference type="CTD" id="258734"/>
<dbReference type="MGI" id="MGI:3030336">
    <property type="gene designation" value="Or5p76"/>
</dbReference>
<dbReference type="VEuPathDB" id="HostDB:ENSMUSG00000058014"/>
<dbReference type="eggNOG" id="ENOG502SKA1">
    <property type="taxonomic scope" value="Eukaryota"/>
</dbReference>
<dbReference type="GeneTree" id="ENSGT01130000278279"/>
<dbReference type="HOGENOM" id="CLU_012526_1_0_1"/>
<dbReference type="InParanoid" id="Q8VG09"/>
<dbReference type="OMA" id="MHFTEGR"/>
<dbReference type="OrthoDB" id="9440694at2759"/>
<dbReference type="PhylomeDB" id="Q8VG09"/>
<dbReference type="TreeFam" id="TF338848"/>
<dbReference type="BioGRID-ORCS" id="258734">
    <property type="hits" value="2 hits in 71 CRISPR screens"/>
</dbReference>
<dbReference type="PRO" id="PR:Q8VG09"/>
<dbReference type="Proteomes" id="UP000000589">
    <property type="component" value="Chromosome 7"/>
</dbReference>
<dbReference type="RNAct" id="Q8VG09">
    <property type="molecule type" value="protein"/>
</dbReference>
<dbReference type="GO" id="GO:0016020">
    <property type="term" value="C:membrane"/>
    <property type="evidence" value="ECO:0000247"/>
    <property type="project" value="MGI"/>
</dbReference>
<dbReference type="GO" id="GO:0005886">
    <property type="term" value="C:plasma membrane"/>
    <property type="evidence" value="ECO:0007669"/>
    <property type="project" value="UniProtKB-SubCell"/>
</dbReference>
<dbReference type="GO" id="GO:0004930">
    <property type="term" value="F:G protein-coupled receptor activity"/>
    <property type="evidence" value="ECO:0007669"/>
    <property type="project" value="UniProtKB-KW"/>
</dbReference>
<dbReference type="GO" id="GO:0004984">
    <property type="term" value="F:olfactory receptor activity"/>
    <property type="evidence" value="ECO:0000247"/>
    <property type="project" value="MGI"/>
</dbReference>
<dbReference type="GO" id="GO:0007186">
    <property type="term" value="P:G protein-coupled receptor signaling pathway"/>
    <property type="evidence" value="ECO:0000247"/>
    <property type="project" value="MGI"/>
</dbReference>
<dbReference type="GO" id="GO:0007608">
    <property type="term" value="P:sensory perception of smell"/>
    <property type="evidence" value="ECO:0000247"/>
    <property type="project" value="MGI"/>
</dbReference>
<dbReference type="CDD" id="cd15416">
    <property type="entry name" value="7tmA_OR5P-like"/>
    <property type="match status" value="1"/>
</dbReference>
<dbReference type="FunFam" id="1.20.1070.10:FF:000004">
    <property type="entry name" value="Olfactory receptor"/>
    <property type="match status" value="1"/>
</dbReference>
<dbReference type="Gene3D" id="1.20.1070.10">
    <property type="entry name" value="Rhodopsin 7-helix transmembrane proteins"/>
    <property type="match status" value="1"/>
</dbReference>
<dbReference type="InterPro" id="IPR000276">
    <property type="entry name" value="GPCR_Rhodpsn"/>
</dbReference>
<dbReference type="InterPro" id="IPR017452">
    <property type="entry name" value="GPCR_Rhodpsn_7TM"/>
</dbReference>
<dbReference type="InterPro" id="IPR000725">
    <property type="entry name" value="Olfact_rcpt"/>
</dbReference>
<dbReference type="PANTHER" id="PTHR48018">
    <property type="entry name" value="OLFACTORY RECEPTOR"/>
    <property type="match status" value="1"/>
</dbReference>
<dbReference type="Pfam" id="PF13853">
    <property type="entry name" value="7tm_4"/>
    <property type="match status" value="1"/>
</dbReference>
<dbReference type="PRINTS" id="PR00237">
    <property type="entry name" value="GPCRRHODOPSN"/>
</dbReference>
<dbReference type="PRINTS" id="PR00245">
    <property type="entry name" value="OLFACTORYR"/>
</dbReference>
<dbReference type="SUPFAM" id="SSF81321">
    <property type="entry name" value="Family A G protein-coupled receptor-like"/>
    <property type="match status" value="1"/>
</dbReference>
<dbReference type="PROSITE" id="PS00237">
    <property type="entry name" value="G_PROTEIN_RECEP_F1_1"/>
    <property type="match status" value="1"/>
</dbReference>
<dbReference type="PROSITE" id="PS50262">
    <property type="entry name" value="G_PROTEIN_RECEP_F1_2"/>
    <property type="match status" value="1"/>
</dbReference>
<feature type="chain" id="PRO_0000150853" description="Olfactory receptor 5P76">
    <location>
        <begin position="1"/>
        <end position="314"/>
    </location>
</feature>
<feature type="topological domain" description="Extracellular" evidence="1">
    <location>
        <begin position="1"/>
        <end position="28"/>
    </location>
</feature>
<feature type="transmembrane region" description="Helical; Name=1" evidence="1">
    <location>
        <begin position="29"/>
        <end position="49"/>
    </location>
</feature>
<feature type="topological domain" description="Cytoplasmic" evidence="1">
    <location>
        <begin position="50"/>
        <end position="57"/>
    </location>
</feature>
<feature type="transmembrane region" description="Helical; Name=2" evidence="1">
    <location>
        <begin position="58"/>
        <end position="78"/>
    </location>
</feature>
<feature type="topological domain" description="Extracellular" evidence="1">
    <location>
        <begin position="79"/>
        <end position="102"/>
    </location>
</feature>
<feature type="transmembrane region" description="Helical; Name=3" evidence="1">
    <location>
        <begin position="103"/>
        <end position="123"/>
    </location>
</feature>
<feature type="topological domain" description="Cytoplasmic" evidence="1">
    <location>
        <begin position="124"/>
        <end position="136"/>
    </location>
</feature>
<feature type="transmembrane region" description="Helical; Name=4" evidence="1">
    <location>
        <begin position="137"/>
        <end position="157"/>
    </location>
</feature>
<feature type="topological domain" description="Extracellular" evidence="1">
    <location>
        <begin position="158"/>
        <end position="199"/>
    </location>
</feature>
<feature type="transmembrane region" description="Helical; Name=5" evidence="1">
    <location>
        <begin position="200"/>
        <end position="220"/>
    </location>
</feature>
<feature type="topological domain" description="Cytoplasmic" evidence="1">
    <location>
        <begin position="221"/>
        <end position="240"/>
    </location>
</feature>
<feature type="transmembrane region" description="Helical; Name=6" evidence="1">
    <location>
        <begin position="241"/>
        <end position="261"/>
    </location>
</feature>
<feature type="topological domain" description="Extracellular" evidence="1">
    <location>
        <begin position="262"/>
        <end position="274"/>
    </location>
</feature>
<feature type="transmembrane region" description="Helical; Name=7" evidence="1">
    <location>
        <begin position="275"/>
        <end position="295"/>
    </location>
</feature>
<feature type="topological domain" description="Cytoplasmic" evidence="1">
    <location>
        <begin position="296"/>
        <end position="314"/>
    </location>
</feature>
<feature type="glycosylation site" description="N-linked (GlcNAc...) asparagine" evidence="1">
    <location>
        <position position="8"/>
    </location>
</feature>
<feature type="disulfide bond" evidence="2">
    <location>
        <begin position="100"/>
        <end position="192"/>
    </location>
</feature>
<accession>Q8VG09</accession>
<accession>Q0VBE2</accession>
<reference key="1">
    <citation type="journal article" date="2002" name="Nat. Neurosci.">
        <title>The olfactory receptor gene superfamily of the mouse.</title>
        <authorList>
            <person name="Zhang X."/>
            <person name="Firestein S."/>
        </authorList>
    </citation>
    <scope>NUCLEOTIDE SEQUENCE [GENOMIC DNA]</scope>
</reference>
<reference key="2">
    <citation type="journal article" date="2002" name="Hum. Mol. Genet.">
        <title>Different evolutionary processes shaped the mouse and human olfactory receptor gene families.</title>
        <authorList>
            <person name="Young J.M."/>
            <person name="Friedman C."/>
            <person name="Williams E.M."/>
            <person name="Ross J.A."/>
            <person name="Tonnes-Priddy L."/>
            <person name="Trask B.J."/>
        </authorList>
    </citation>
    <scope>NUCLEOTIDE SEQUENCE [GENOMIC DNA]</scope>
</reference>
<reference key="3">
    <citation type="journal article" date="2002" name="Hum. Mol. Genet.">
        <authorList>
            <person name="Young J.M."/>
            <person name="Friedman C."/>
            <person name="Williams E.M."/>
            <person name="Ross J.A."/>
            <person name="Tonnes-Priddy L."/>
            <person name="Trask B.J."/>
        </authorList>
    </citation>
    <scope>ERRATUM OF PUBMED:11875048</scope>
</reference>
<reference key="4">
    <citation type="journal article" date="2004" name="Genome Res.">
        <title>The status, quality, and expansion of the NIH full-length cDNA project: the Mammalian Gene Collection (MGC).</title>
        <authorList>
            <consortium name="The MGC Project Team"/>
        </authorList>
    </citation>
    <scope>NUCLEOTIDE SEQUENCE [LARGE SCALE MRNA]</scope>
    <source>
        <tissue>Brain</tissue>
    </source>
</reference>
<comment type="function">
    <text>Potential odorant receptor.</text>
</comment>
<comment type="subcellular location">
    <subcellularLocation>
        <location evidence="3">Cell membrane</location>
        <topology evidence="1">Multi-pass membrane protein</topology>
    </subcellularLocation>
</comment>
<comment type="similarity">
    <text evidence="2">Belongs to the G-protein coupled receptor 1 family.</text>
</comment>